<organism>
    <name type="scientific">Candida albicans (strain SC5314 / ATCC MYA-2876)</name>
    <name type="common">Yeast</name>
    <dbReference type="NCBI Taxonomy" id="237561"/>
    <lineage>
        <taxon>Eukaryota</taxon>
        <taxon>Fungi</taxon>
        <taxon>Dikarya</taxon>
        <taxon>Ascomycota</taxon>
        <taxon>Saccharomycotina</taxon>
        <taxon>Pichiomycetes</taxon>
        <taxon>Debaryomycetaceae</taxon>
        <taxon>Candida/Lodderomyces clade</taxon>
        <taxon>Candida</taxon>
    </lineage>
</organism>
<evidence type="ECO:0000250" key="1"/>
<evidence type="ECO:0000255" key="2"/>
<evidence type="ECO:0000255" key="3">
    <source>
        <dbReference type="PROSITE-ProRule" id="PRU00042"/>
    </source>
</evidence>
<evidence type="ECO:0000256" key="4">
    <source>
        <dbReference type="SAM" id="MobiDB-lite"/>
    </source>
</evidence>
<evidence type="ECO:0000269" key="5">
    <source>
    </source>
</evidence>
<evidence type="ECO:0000269" key="6">
    <source>
    </source>
</evidence>
<evidence type="ECO:0000269" key="7">
    <source>
    </source>
</evidence>
<evidence type="ECO:0000269" key="8">
    <source>
    </source>
</evidence>
<evidence type="ECO:0000269" key="9">
    <source>
    </source>
</evidence>
<evidence type="ECO:0000305" key="10"/>
<proteinExistence type="evidence at protein level"/>
<feature type="chain" id="PRO_0000046824" description="pH-response transcription factor pacC/RIM101">
    <location>
        <begin position="1"/>
        <end position="661"/>
    </location>
</feature>
<feature type="zinc finger region" description="C2H2-type 1" evidence="3">
    <location>
        <begin position="208"/>
        <end position="233"/>
    </location>
</feature>
<feature type="zinc finger region" description="C2H2-type 2" evidence="3">
    <location>
        <begin position="244"/>
        <end position="268"/>
    </location>
</feature>
<feature type="zinc finger region" description="C2H2-type 3" evidence="3">
    <location>
        <begin position="274"/>
        <end position="296"/>
    </location>
</feature>
<feature type="region of interest" description="Disordered" evidence="4">
    <location>
        <begin position="1"/>
        <end position="75"/>
    </location>
</feature>
<feature type="region of interest" description="Disordered" evidence="4">
    <location>
        <begin position="92"/>
        <end position="118"/>
    </location>
</feature>
<feature type="region of interest" description="Disordered" evidence="4">
    <location>
        <begin position="143"/>
        <end position="189"/>
    </location>
</feature>
<feature type="region of interest" description="Disordered" evidence="4">
    <location>
        <begin position="287"/>
        <end position="331"/>
    </location>
</feature>
<feature type="region of interest" description="Disordered" evidence="4">
    <location>
        <begin position="479"/>
        <end position="524"/>
    </location>
</feature>
<feature type="region of interest" description="Disordered" evidence="4">
    <location>
        <begin position="558"/>
        <end position="586"/>
    </location>
</feature>
<feature type="coiled-coil region" evidence="2">
    <location>
        <begin position="626"/>
        <end position="654"/>
    </location>
</feature>
<feature type="short sequence motif" description="Nuclear localization signal">
    <location>
        <begin position="290"/>
        <end position="296"/>
    </location>
</feature>
<feature type="short sequence motif" description="YPX[LI] motif 1">
    <location>
        <begin position="498"/>
        <end position="501"/>
    </location>
</feature>
<feature type="short sequence motif" description="YPX[LI] motif 2">
    <location>
        <begin position="531"/>
        <end position="534"/>
    </location>
</feature>
<feature type="short sequence motif" description="YPX[LI] motif 3">
    <location>
        <begin position="655"/>
        <end position="658"/>
    </location>
</feature>
<feature type="compositionally biased region" description="Polar residues" evidence="4">
    <location>
        <begin position="12"/>
        <end position="35"/>
    </location>
</feature>
<feature type="compositionally biased region" description="Low complexity" evidence="4">
    <location>
        <begin position="43"/>
        <end position="54"/>
    </location>
</feature>
<feature type="compositionally biased region" description="Polar residues" evidence="4">
    <location>
        <begin position="59"/>
        <end position="75"/>
    </location>
</feature>
<feature type="compositionally biased region" description="Polar residues" evidence="4">
    <location>
        <begin position="98"/>
        <end position="118"/>
    </location>
</feature>
<feature type="compositionally biased region" description="Low complexity" evidence="4">
    <location>
        <begin position="145"/>
        <end position="163"/>
    </location>
</feature>
<feature type="compositionally biased region" description="Low complexity" evidence="4">
    <location>
        <begin position="173"/>
        <end position="189"/>
    </location>
</feature>
<feature type="compositionally biased region" description="Basic and acidic residues" evidence="4">
    <location>
        <begin position="287"/>
        <end position="321"/>
    </location>
</feature>
<feature type="compositionally biased region" description="Polar residues" evidence="4">
    <location>
        <begin position="479"/>
        <end position="514"/>
    </location>
</feature>
<feature type="compositionally biased region" description="Acidic residues" evidence="4">
    <location>
        <begin position="567"/>
        <end position="586"/>
    </location>
</feature>
<feature type="mutagenesis site" description="In RIM101-405; is active independent on proteolytic processing. Allows filamentation at alkaline pH in the absence of RIM13 or RIM8 and RIM20." evidence="6">
    <location>
        <begin position="463"/>
        <end position="661"/>
    </location>
</feature>
<feature type="mutagenesis site" description="In CEM-1; dominant active allele that allows filamentation, activates alkaline-expressed and represses acid-expressed genes at acidic pH." evidence="7">
    <location>
        <begin position="476"/>
        <end position="661"/>
    </location>
</feature>
<feature type="mutagenesis site" description="In CEM-2; dominant active allele that allows filamentation, activates alkaline-expressed and represses acid-expressed genes at acidic pH." evidence="7">
    <location>
        <begin position="584"/>
        <end position="661"/>
    </location>
</feature>
<feature type="sequence conflict" description="In Ref. 1; AAD51714." evidence="10" ref="1">
    <original>AGSAEFT</original>
    <variation>RRFWSSSP</variation>
    <location>
        <begin position="401"/>
        <end position="407"/>
    </location>
</feature>
<protein>
    <recommendedName>
        <fullName>pH-response transcription factor pacC/RIM101</fullName>
    </recommendedName>
    <alternativeName>
        <fullName>pH-response regulator protein 2</fullName>
    </alternativeName>
</protein>
<accession>Q9UW14</accession>
<accession>A0A1D8PFX3</accession>
<accession>Q59ZU5</accession>
<comment type="function">
    <text evidence="5 8">Transcription factor that mediates regulation of both acid- and alkaline-expressed genes in response to ambient pH. At alkaline ambient pH, activates transcription of alkaline-expressed genes (including RIM101 itself) and represses transcription of acid-expressed genes. Specifically recognizes and binds the consensus sequence 5'-CCAAGAA-3'. Required for the control of alkaline pH-induced filamentation (dimorphic switch) and virulence.</text>
</comment>
<comment type="subunit">
    <text evidence="1">Binds to DNA. Interacts with RIM20, which binds to the YPX[LI] motifs and is required for proteolytic processing (By similarity).</text>
</comment>
<comment type="subcellular location">
    <subcellularLocation>
        <location evidence="1">Cytoplasm</location>
    </subcellularLocation>
    <subcellularLocation>
        <location evidence="1">Nucleus</location>
    </subcellularLocation>
</comment>
<comment type="induction">
    <text evidence="5">By alkaline conditions.</text>
</comment>
<comment type="PTM">
    <text evidence="9">Activated by C-terminal proteolytic cleavage. At neutral to alkaline ambient pH, the signaling protease (probably RIM13) cleaves RIM101 to yield the 74 kDa functional form. Also exists as a 65 kDa form at acidic pH, which may govern pH-independent processes.</text>
</comment>
<comment type="similarity">
    <text evidence="10">Belongs to the pacC/RIM101 family.</text>
</comment>
<comment type="sequence caution" evidence="10">
    <conflict type="erroneous initiation">
        <sequence resource="EMBL-CDS" id="AAD51714"/>
    </conflict>
</comment>
<gene>
    <name type="primary">RIM101</name>
    <name type="synonym">HRM101</name>
    <name type="synonym">PRR2</name>
    <name type="ordered locus">CAALFM_C114340CA</name>
    <name type="ORF">CaO19.7247</name>
</gene>
<name>PACC_CANAL</name>
<sequence>MNYNIHPVTYLNADSNTGASESTASHHGSKKSPSSDIDVDNATSPSSFTSSQSPHINAMGNSPHSSFTSQSAANSPITDAKQHLVKPTTTKPAAFAPSANQSNTTASQSYTQPAQQLPTQLHPSLNQAYNNQPSYYLHQPTYGYQQQQQQQQQHQEFNQPSQQYHDHHGYYSNNNILNQNQPAPQQNPVKPFKKTYKKIRDEDLKGPFKCLWSNCNIIFETPEILYDHLCDDHVGRKSSNNLSLTCLWENCGTTTVKRDHITSHLRVHVPLKPFHCDLCPKSFKRPQDLKKHSKTHAEDHPKKLKKAQRELMKQQQKEAKQQQKLANKRANSMNATTASDLQLNYYSGNPADGLNYDDTSRKRRYENNSQHNMYVVNSILNDFNFQQMAQAPQQPGVVGTAGSAEFTTKRMKAGTEYNIDVFNKLNHLDDHLHHHHPQQQHPQQQYGGNIYEAEKFFNSLSNSIDMQYQNMSTQYQQQHAGSTFAQQKPTQQASGQLYPSLPTIGNGSYTTSGSSHKEGLVNNHNGYLPSYPQINRSLPYSSGVAQQPPSALEFGGVSTYQKSAQSYEEDSSDSSEEDDYSTSSEDELDTLFDKLNIDDNKVEEVTIDGFNLKDVAKHREMIHAVLGYLRNQIEQQEKEKSKEQKEVDVNETKLYPTITAF</sequence>
<keyword id="KW-0175">Coiled coil</keyword>
<keyword id="KW-0963">Cytoplasm</keyword>
<keyword id="KW-0479">Metal-binding</keyword>
<keyword id="KW-0539">Nucleus</keyword>
<keyword id="KW-1185">Reference proteome</keyword>
<keyword id="KW-0677">Repeat</keyword>
<keyword id="KW-0678">Repressor</keyword>
<keyword id="KW-0862">Zinc</keyword>
<keyword id="KW-0863">Zinc-finger</keyword>
<reference key="1">
    <citation type="journal article" date="2000" name="Mol. Cell. Biol.">
        <title>RIM101-dependent and -independent pathways govern pH responses in Candida albicans.</title>
        <authorList>
            <person name="Davis D.A."/>
            <person name="Wilson R.B."/>
            <person name="Mitchell A.P."/>
        </authorList>
    </citation>
    <scope>NUCLEOTIDE SEQUENCE [GENOMIC DNA]</scope>
    <scope>MUTAGENESIS OF 463-SER--PHE-661</scope>
    <source>
        <strain>SC5314 / CAI4 / ATCC MYA-682</strain>
    </source>
</reference>
<reference key="2">
    <citation type="journal article" date="2004" name="Proc. Natl. Acad. Sci. U.S.A.">
        <title>The diploid genome sequence of Candida albicans.</title>
        <authorList>
            <person name="Jones T."/>
            <person name="Federspiel N.A."/>
            <person name="Chibana H."/>
            <person name="Dungan J."/>
            <person name="Kalman S."/>
            <person name="Magee B.B."/>
            <person name="Newport G."/>
            <person name="Thorstenson Y.R."/>
            <person name="Agabian N."/>
            <person name="Magee P.T."/>
            <person name="Davis R.W."/>
            <person name="Scherer S."/>
        </authorList>
    </citation>
    <scope>NUCLEOTIDE SEQUENCE [LARGE SCALE GENOMIC DNA]</scope>
    <source>
        <strain>SC5314 / ATCC MYA-2876</strain>
    </source>
</reference>
<reference key="3">
    <citation type="journal article" date="2007" name="Genome Biol.">
        <title>Assembly of the Candida albicans genome into sixteen supercontigs aligned on the eight chromosomes.</title>
        <authorList>
            <person name="van het Hoog M."/>
            <person name="Rast T.J."/>
            <person name="Martchenko M."/>
            <person name="Grindle S."/>
            <person name="Dignard D."/>
            <person name="Hogues H."/>
            <person name="Cuomo C."/>
            <person name="Berriman M."/>
            <person name="Scherer S."/>
            <person name="Magee B.B."/>
            <person name="Whiteway M."/>
            <person name="Chibana H."/>
            <person name="Nantel A."/>
            <person name="Magee P.T."/>
        </authorList>
    </citation>
    <scope>GENOME REANNOTATION</scope>
    <source>
        <strain>SC5314 / ATCC MYA-2876</strain>
    </source>
</reference>
<reference key="4">
    <citation type="journal article" date="2013" name="Genome Biol.">
        <title>Assembly of a phased diploid Candida albicans genome facilitates allele-specific measurements and provides a simple model for repeat and indel structure.</title>
        <authorList>
            <person name="Muzzey D."/>
            <person name="Schwartz K."/>
            <person name="Weissman J.S."/>
            <person name="Sherlock G."/>
        </authorList>
    </citation>
    <scope>NUCLEOTIDE SEQUENCE [LARGE SCALE GENOMIC DNA]</scope>
    <scope>GENOME REANNOTATION</scope>
    <source>
        <strain>SC5314 / ATCC MYA-2876</strain>
    </source>
</reference>
<reference key="5">
    <citation type="journal article" date="1999" name="J. Bacteriol.">
        <title>Effect of environmental pH on morphological development of Candida albicans is mediated via the PacC-related transcription factor encoded by PRR2.</title>
        <authorList>
            <person name="Ramon A.M."/>
            <person name="Porta A."/>
            <person name="Fonzi W.A."/>
        </authorList>
    </citation>
    <scope>FUNCTION</scope>
    <scope>INDUCTION</scope>
</reference>
<reference key="6">
    <citation type="journal article" date="2000" name="Mol. Cell. Biol.">
        <title>Dominant active alleles of RIM101 (PRR2) bypass the pH restriction on filamentation of Candida albicans.</title>
        <authorList>
            <person name="El Barkani A."/>
            <person name="Kurzai O."/>
            <person name="Fonzi W.A."/>
            <person name="Ramon A.M."/>
            <person name="Porta A."/>
            <person name="Frosch M."/>
            <person name="Muehlschlegel F.A."/>
        </authorList>
    </citation>
    <scope>MUTAGENESIS OF 476-GLN--PHE-661 AND 584-SER--PHE-661</scope>
</reference>
<reference key="7">
    <citation type="journal article" date="2003" name="Eukaryot. Cell">
        <title>Diverged binding specificity of Rim101p, the Candida albicans ortholog of PacC.</title>
        <authorList>
            <person name="Ramon A.M."/>
            <person name="Fonzi W.A."/>
        </authorList>
    </citation>
    <scope>DNA-BINDING</scope>
    <scope>FUNCTION IN TRANSCRIPTIONAL ACTIVATION</scope>
</reference>
<reference key="8">
    <citation type="journal article" date="2004" name="Eukaryot. Cell">
        <title>Candida albicans Rim13p, a protease required for Rim101p processing at acidic and alkaline pHs.</title>
        <authorList>
            <person name="Li M."/>
            <person name="Martin S.J."/>
            <person name="Bruno V.M."/>
            <person name="Mitchell A.P."/>
            <person name="Davis D.A."/>
        </authorList>
    </citation>
    <scope>PROTEOLYTIC PROCESSING</scope>
</reference>
<dbReference type="EMBL" id="AF173841">
    <property type="protein sequence ID" value="AAD51714.1"/>
    <property type="status" value="ALT_INIT"/>
    <property type="molecule type" value="Genomic_DNA"/>
</dbReference>
<dbReference type="EMBL" id="CP017623">
    <property type="protein sequence ID" value="AOW27034.1"/>
    <property type="molecule type" value="Genomic_DNA"/>
</dbReference>
<dbReference type="RefSeq" id="XP_715047.1">
    <property type="nucleotide sequence ID" value="XM_709954.1"/>
</dbReference>
<dbReference type="BioGRID" id="1226374">
    <property type="interactions" value="1"/>
</dbReference>
<dbReference type="IntAct" id="Q9UW14">
    <property type="interactions" value="1"/>
</dbReference>
<dbReference type="STRING" id="237561.Q9UW14"/>
<dbReference type="EnsemblFungi" id="C1_14340C_A-T">
    <property type="protein sequence ID" value="C1_14340C_A-T-p1"/>
    <property type="gene ID" value="C1_14340C_A"/>
</dbReference>
<dbReference type="GeneID" id="3643280"/>
<dbReference type="KEGG" id="cal:CAALFM_C114340CA"/>
<dbReference type="CGD" id="CAL0000174156">
    <property type="gene designation" value="RIM101"/>
</dbReference>
<dbReference type="VEuPathDB" id="FungiDB:C1_14340C_A"/>
<dbReference type="eggNOG" id="KOG1721">
    <property type="taxonomic scope" value="Eukaryota"/>
</dbReference>
<dbReference type="HOGENOM" id="CLU_028624_0_0_1"/>
<dbReference type="InParanoid" id="Q9UW14"/>
<dbReference type="OMA" id="WENCGTT"/>
<dbReference type="OrthoDB" id="6155966at2759"/>
<dbReference type="PHI-base" id="PHI:185"/>
<dbReference type="Proteomes" id="UP000000559">
    <property type="component" value="Chromosome 1"/>
</dbReference>
<dbReference type="GO" id="GO:0005737">
    <property type="term" value="C:cytoplasm"/>
    <property type="evidence" value="ECO:0007669"/>
    <property type="project" value="UniProtKB-SubCell"/>
</dbReference>
<dbReference type="GO" id="GO:0005634">
    <property type="term" value="C:nucleus"/>
    <property type="evidence" value="ECO:0000318"/>
    <property type="project" value="GO_Central"/>
</dbReference>
<dbReference type="GO" id="GO:0003677">
    <property type="term" value="F:DNA binding"/>
    <property type="evidence" value="ECO:0000314"/>
    <property type="project" value="CGD"/>
</dbReference>
<dbReference type="GO" id="GO:0001216">
    <property type="term" value="F:DNA-binding transcription activator activity"/>
    <property type="evidence" value="ECO:0000315"/>
    <property type="project" value="CGD"/>
</dbReference>
<dbReference type="GO" id="GO:0008270">
    <property type="term" value="F:zinc ion binding"/>
    <property type="evidence" value="ECO:0007669"/>
    <property type="project" value="UniProtKB-KW"/>
</dbReference>
<dbReference type="GO" id="GO:0071469">
    <property type="term" value="P:cellular response to alkaline pH"/>
    <property type="evidence" value="ECO:0000315"/>
    <property type="project" value="CGD"/>
</dbReference>
<dbReference type="GO" id="GO:0071280">
    <property type="term" value="P:cellular response to copper ion"/>
    <property type="evidence" value="ECO:0000315"/>
    <property type="project" value="CGD"/>
</dbReference>
<dbReference type="GO" id="GO:0010106">
    <property type="term" value="P:cellular response to iron ion starvation"/>
    <property type="evidence" value="ECO:0000315"/>
    <property type="project" value="CGD"/>
</dbReference>
<dbReference type="GO" id="GO:0071285">
    <property type="term" value="P:cellular response to lithium ion"/>
    <property type="evidence" value="ECO:0000315"/>
    <property type="project" value="CGD"/>
</dbReference>
<dbReference type="GO" id="GO:0036244">
    <property type="term" value="P:cellular response to neutral pH"/>
    <property type="evidence" value="ECO:0000315"/>
    <property type="project" value="CGD"/>
</dbReference>
<dbReference type="GO" id="GO:0071467">
    <property type="term" value="P:cellular response to pH"/>
    <property type="evidence" value="ECO:0000314"/>
    <property type="project" value="CGD"/>
</dbReference>
<dbReference type="GO" id="GO:0001410">
    <property type="term" value="P:chlamydospore formation"/>
    <property type="evidence" value="ECO:0000315"/>
    <property type="project" value="CGD"/>
</dbReference>
<dbReference type="GO" id="GO:0030447">
    <property type="term" value="P:filamentous growth"/>
    <property type="evidence" value="ECO:0000315"/>
    <property type="project" value="CGD"/>
</dbReference>
<dbReference type="GO" id="GO:0044182">
    <property type="term" value="P:filamentous growth of a population of unicellular organisms"/>
    <property type="evidence" value="ECO:0000315"/>
    <property type="project" value="CGD"/>
</dbReference>
<dbReference type="GO" id="GO:0036171">
    <property type="term" value="P:filamentous growth of a population of unicellular organisms in response to chemical stimulus"/>
    <property type="evidence" value="ECO:0000315"/>
    <property type="project" value="CGD"/>
</dbReference>
<dbReference type="GO" id="GO:0036178">
    <property type="term" value="P:filamentous growth of a population of unicellular organisms in response to neutral pH"/>
    <property type="evidence" value="ECO:0000315"/>
    <property type="project" value="CGD"/>
</dbReference>
<dbReference type="GO" id="GO:0036177">
    <property type="term" value="P:filamentous growth of a population of unicellular organisms in response to pH"/>
    <property type="evidence" value="ECO:0000315"/>
    <property type="project" value="CGD"/>
</dbReference>
<dbReference type="GO" id="GO:1900742">
    <property type="term" value="P:negative regulation of filamentous growth of a population of unicellular organisms in response to pH"/>
    <property type="evidence" value="ECO:0000315"/>
    <property type="project" value="CGD"/>
</dbReference>
<dbReference type="GO" id="GO:1900430">
    <property type="term" value="P:positive regulation of filamentous growth of a population of unicellular organisms"/>
    <property type="evidence" value="ECO:0000315"/>
    <property type="project" value="CGD"/>
</dbReference>
<dbReference type="GO" id="GO:1900445">
    <property type="term" value="P:positive regulation of filamentous growth of a population of unicellular organisms in response to biotic stimulus"/>
    <property type="evidence" value="ECO:0000315"/>
    <property type="project" value="CGD"/>
</dbReference>
<dbReference type="GO" id="GO:1900439">
    <property type="term" value="P:positive regulation of filamentous growth of a population of unicellular organisms in response to chemical stimulus"/>
    <property type="evidence" value="ECO:0000315"/>
    <property type="project" value="CGD"/>
</dbReference>
<dbReference type="GO" id="GO:0002666">
    <property type="term" value="P:positive regulation of T cell tolerance induction"/>
    <property type="evidence" value="ECO:0000315"/>
    <property type="project" value="CGD"/>
</dbReference>
<dbReference type="GO" id="GO:0045944">
    <property type="term" value="P:positive regulation of transcription by RNA polymerase II"/>
    <property type="evidence" value="ECO:0000318"/>
    <property type="project" value="GO_Central"/>
</dbReference>
<dbReference type="GO" id="GO:0006357">
    <property type="term" value="P:regulation of transcription by RNA polymerase II"/>
    <property type="evidence" value="ECO:0000315"/>
    <property type="project" value="CGD"/>
</dbReference>
<dbReference type="GO" id="GO:0044409">
    <property type="term" value="P:symbiont entry into host"/>
    <property type="evidence" value="ECO:0000315"/>
    <property type="project" value="CGD"/>
</dbReference>
<dbReference type="GO" id="GO:0052032">
    <property type="term" value="P:symbiont-mediated perturbation of host inflammatory response"/>
    <property type="evidence" value="ECO:0000315"/>
    <property type="project" value="CGD"/>
</dbReference>
<dbReference type="FunFam" id="3.30.160.60:FF:000100">
    <property type="entry name" value="Zinc finger 45-like"/>
    <property type="match status" value="1"/>
</dbReference>
<dbReference type="Gene3D" id="3.30.160.60">
    <property type="entry name" value="Classic Zinc Finger"/>
    <property type="match status" value="2"/>
</dbReference>
<dbReference type="InterPro" id="IPR050806">
    <property type="entry name" value="pacC/RIM101"/>
</dbReference>
<dbReference type="InterPro" id="IPR036236">
    <property type="entry name" value="Znf_C2H2_sf"/>
</dbReference>
<dbReference type="InterPro" id="IPR013087">
    <property type="entry name" value="Znf_C2H2_type"/>
</dbReference>
<dbReference type="PANTHER" id="PTHR47257">
    <property type="entry name" value="PH-RESPONSE TRANSCRIPTION FACTOR PACC/RIM101"/>
    <property type="match status" value="1"/>
</dbReference>
<dbReference type="PANTHER" id="PTHR47257:SF1">
    <property type="entry name" value="PH-RESPONSE TRANSCRIPTION FACTOR PACC_RIM101"/>
    <property type="match status" value="1"/>
</dbReference>
<dbReference type="SMART" id="SM00355">
    <property type="entry name" value="ZnF_C2H2"/>
    <property type="match status" value="3"/>
</dbReference>
<dbReference type="SUPFAM" id="SSF57667">
    <property type="entry name" value="beta-beta-alpha zinc fingers"/>
    <property type="match status" value="2"/>
</dbReference>
<dbReference type="PROSITE" id="PS00028">
    <property type="entry name" value="ZINC_FINGER_C2H2_1"/>
    <property type="match status" value="2"/>
</dbReference>
<dbReference type="PROSITE" id="PS50157">
    <property type="entry name" value="ZINC_FINGER_C2H2_2"/>
    <property type="match status" value="3"/>
</dbReference>